<keyword id="KW-0238">DNA-binding</keyword>
<keyword id="KW-1185">Reference proteome</keyword>
<keyword id="KW-0804">Transcription</keyword>
<keyword id="KW-0805">Transcription regulation</keyword>
<proteinExistence type="predicted"/>
<name>Y043_MYCTO</name>
<accession>P9WMG8</accession>
<accession>L0T2E2</accession>
<accession>P67737</accession>
<accession>P71700</accession>
<gene>
    <name type="ordered locus">MT0049</name>
</gene>
<evidence type="ECO:0000255" key="1">
    <source>
        <dbReference type="PROSITE-ProRule" id="PRU00307"/>
    </source>
</evidence>
<protein>
    <recommendedName>
        <fullName>Uncharacterized HTH-type transcriptional regulator MT0049</fullName>
    </recommendedName>
</protein>
<sequence>MPKKYGVKEKDQVVAHILNLLLTGKLRSGDRVDRNEIAHGLGVSRVPIQEALVQLEHDGIVSTRYHRGAFIERFDVATILEHHELDGLLNGIASARAAANPTPRILGQLDAVMRSLRNSKESRAFAECVWEYRRTVNDEYAGPRLHATIRASQNLIPRVFWMTYQNSRDDVLPFYEEENAAIHRREPEAARAACIGRSELMAQTMLAELFRRRVLVPPEGACPGPFGAPIPGFARSYQPSSPVP</sequence>
<feature type="chain" id="PRO_0000427306" description="Uncharacterized HTH-type transcriptional regulator MT0049">
    <location>
        <begin position="1"/>
        <end position="244"/>
    </location>
</feature>
<feature type="domain" description="HTH gntR-type" evidence="1">
    <location>
        <begin position="7"/>
        <end position="74"/>
    </location>
</feature>
<feature type="DNA-binding region" description="H-T-H motif" evidence="1">
    <location>
        <begin position="34"/>
        <end position="53"/>
    </location>
</feature>
<organism>
    <name type="scientific">Mycobacterium tuberculosis (strain CDC 1551 / Oshkosh)</name>
    <dbReference type="NCBI Taxonomy" id="83331"/>
    <lineage>
        <taxon>Bacteria</taxon>
        <taxon>Bacillati</taxon>
        <taxon>Actinomycetota</taxon>
        <taxon>Actinomycetes</taxon>
        <taxon>Mycobacteriales</taxon>
        <taxon>Mycobacteriaceae</taxon>
        <taxon>Mycobacterium</taxon>
        <taxon>Mycobacterium tuberculosis complex</taxon>
    </lineage>
</organism>
<reference key="1">
    <citation type="journal article" date="2002" name="J. Bacteriol.">
        <title>Whole-genome comparison of Mycobacterium tuberculosis clinical and laboratory strains.</title>
        <authorList>
            <person name="Fleischmann R.D."/>
            <person name="Alland D."/>
            <person name="Eisen J.A."/>
            <person name="Carpenter L."/>
            <person name="White O."/>
            <person name="Peterson J.D."/>
            <person name="DeBoy R.T."/>
            <person name="Dodson R.J."/>
            <person name="Gwinn M.L."/>
            <person name="Haft D.H."/>
            <person name="Hickey E.K."/>
            <person name="Kolonay J.F."/>
            <person name="Nelson W.C."/>
            <person name="Umayam L.A."/>
            <person name="Ermolaeva M.D."/>
            <person name="Salzberg S.L."/>
            <person name="Delcher A."/>
            <person name="Utterback T.R."/>
            <person name="Weidman J.F."/>
            <person name="Khouri H.M."/>
            <person name="Gill J."/>
            <person name="Mikula A."/>
            <person name="Bishai W."/>
            <person name="Jacobs W.R. Jr."/>
            <person name="Venter J.C."/>
            <person name="Fraser C.M."/>
        </authorList>
    </citation>
    <scope>NUCLEOTIDE SEQUENCE [LARGE SCALE GENOMIC DNA]</scope>
    <source>
        <strain>CDC 1551 / Oshkosh</strain>
    </source>
</reference>
<dbReference type="EMBL" id="AE000516">
    <property type="protein sequence ID" value="AAK44271.1"/>
    <property type="molecule type" value="Genomic_DNA"/>
</dbReference>
<dbReference type="PIR" id="C70912">
    <property type="entry name" value="C70912"/>
</dbReference>
<dbReference type="RefSeq" id="WP_003899786.1">
    <property type="nucleotide sequence ID" value="NZ_KK341227.1"/>
</dbReference>
<dbReference type="SMR" id="P9WMG8"/>
<dbReference type="KEGG" id="mtc:MT0049"/>
<dbReference type="PATRIC" id="fig|83331.31.peg.49"/>
<dbReference type="HOGENOM" id="CLU_017584_5_4_11"/>
<dbReference type="Proteomes" id="UP000001020">
    <property type="component" value="Chromosome"/>
</dbReference>
<dbReference type="GO" id="GO:0003677">
    <property type="term" value="F:DNA binding"/>
    <property type="evidence" value="ECO:0007669"/>
    <property type="project" value="UniProtKB-KW"/>
</dbReference>
<dbReference type="GO" id="GO:0003700">
    <property type="term" value="F:DNA-binding transcription factor activity"/>
    <property type="evidence" value="ECO:0007669"/>
    <property type="project" value="InterPro"/>
</dbReference>
<dbReference type="CDD" id="cd07377">
    <property type="entry name" value="WHTH_GntR"/>
    <property type="match status" value="1"/>
</dbReference>
<dbReference type="Gene3D" id="1.20.120.530">
    <property type="entry name" value="GntR ligand-binding domain-like"/>
    <property type="match status" value="1"/>
</dbReference>
<dbReference type="Gene3D" id="1.10.10.10">
    <property type="entry name" value="Winged helix-like DNA-binding domain superfamily/Winged helix DNA-binding domain"/>
    <property type="match status" value="1"/>
</dbReference>
<dbReference type="InterPro" id="IPR008920">
    <property type="entry name" value="TF_FadR/GntR_C"/>
</dbReference>
<dbReference type="InterPro" id="IPR000524">
    <property type="entry name" value="Tscrpt_reg_HTH_GntR"/>
</dbReference>
<dbReference type="InterPro" id="IPR036388">
    <property type="entry name" value="WH-like_DNA-bd_sf"/>
</dbReference>
<dbReference type="InterPro" id="IPR036390">
    <property type="entry name" value="WH_DNA-bd_sf"/>
</dbReference>
<dbReference type="PANTHER" id="PTHR43537:SF45">
    <property type="entry name" value="GNTR FAMILY REGULATORY PROTEIN"/>
    <property type="match status" value="1"/>
</dbReference>
<dbReference type="PANTHER" id="PTHR43537">
    <property type="entry name" value="TRANSCRIPTIONAL REGULATOR, GNTR FAMILY"/>
    <property type="match status" value="1"/>
</dbReference>
<dbReference type="Pfam" id="PF00392">
    <property type="entry name" value="GntR"/>
    <property type="match status" value="1"/>
</dbReference>
<dbReference type="SMART" id="SM00345">
    <property type="entry name" value="HTH_GNTR"/>
    <property type="match status" value="1"/>
</dbReference>
<dbReference type="SUPFAM" id="SSF46785">
    <property type="entry name" value="Winged helix' DNA-binding domain"/>
    <property type="match status" value="1"/>
</dbReference>
<dbReference type="PROSITE" id="PS50949">
    <property type="entry name" value="HTH_GNTR"/>
    <property type="match status" value="1"/>
</dbReference>